<organism>
    <name type="scientific">Karelsulcia muelleri (strain GWSS)</name>
    <name type="common">Sulcia muelleri</name>
    <dbReference type="NCBI Taxonomy" id="444179"/>
    <lineage>
        <taxon>Bacteria</taxon>
        <taxon>Pseudomonadati</taxon>
        <taxon>Bacteroidota</taxon>
        <taxon>Flavobacteriia</taxon>
        <taxon>Flavobacteriales</taxon>
        <taxon>Candidatus Karelsulcia</taxon>
    </lineage>
</organism>
<comment type="function">
    <text evidence="1">Forms part of the ribosomal stalk which helps the ribosome interact with GTP-bound translation factors.</text>
</comment>
<comment type="subunit">
    <text evidence="1">Part of the ribosomal stalk of the 50S ribosomal subunit. Interacts with L10 and the large rRNA to form the base of the stalk. L10 forms an elongated spine to which L12 dimers bind in a sequential fashion forming a multimeric L10(L12)X complex.</text>
</comment>
<comment type="PTM">
    <text evidence="1">One or more lysine residues are methylated.</text>
</comment>
<comment type="similarity">
    <text evidence="1">Belongs to the universal ribosomal protein uL11 family.</text>
</comment>
<feature type="chain" id="PRO_1000083411" description="Large ribosomal subunit protein uL11">
    <location>
        <begin position="1"/>
        <end position="140"/>
    </location>
</feature>
<proteinExistence type="inferred from homology"/>
<reference key="1">
    <citation type="journal article" date="2007" name="Proc. Natl. Acad. Sci. U.S.A.">
        <title>Parallel genomic evolution and metabolic interdependence in an ancient symbiosis.</title>
        <authorList>
            <person name="McCutcheon J.P."/>
            <person name="Moran N.A."/>
        </authorList>
    </citation>
    <scope>NUCLEOTIDE SEQUENCE [LARGE SCALE GENOMIC DNA]</scope>
    <source>
        <strain>GWSS</strain>
    </source>
</reference>
<gene>
    <name evidence="1" type="primary">rplK</name>
    <name type="ordered locus">SMGWSS_061</name>
</gene>
<accession>A8Z5T7</accession>
<keyword id="KW-0488">Methylation</keyword>
<keyword id="KW-0687">Ribonucleoprotein</keyword>
<keyword id="KW-0689">Ribosomal protein</keyword>
<keyword id="KW-0694">RNA-binding</keyword>
<keyword id="KW-0699">rRNA-binding</keyword>
<sequence length="140" mass="15223">MLKTIKKIIKLQIKGGLANPAPPIGPALGSAGVNIMDFCKQYNFSTQKSKGKLLPVIITIYNDKSFSFIIKEPPVSKQLLELCKLDKGSKESNKIKVGKITLAKIESIAKNKIIDMNCFNIKSAISMVAGTARSMGIEIL</sequence>
<name>RL11_KARMG</name>
<evidence type="ECO:0000255" key="1">
    <source>
        <dbReference type="HAMAP-Rule" id="MF_00736"/>
    </source>
</evidence>
<evidence type="ECO:0000305" key="2"/>
<protein>
    <recommendedName>
        <fullName evidence="1">Large ribosomal subunit protein uL11</fullName>
    </recommendedName>
    <alternativeName>
        <fullName evidence="2">50S ribosomal protein L11</fullName>
    </alternativeName>
</protein>
<dbReference type="EMBL" id="CP000770">
    <property type="protein sequence ID" value="ABS30488.1"/>
    <property type="molecule type" value="Genomic_DNA"/>
</dbReference>
<dbReference type="SMR" id="A8Z5T7"/>
<dbReference type="STRING" id="444179.SMGWSS_061"/>
<dbReference type="KEGG" id="smg:SMGWSS_061"/>
<dbReference type="HOGENOM" id="CLU_074237_2_0_10"/>
<dbReference type="Proteomes" id="UP000000781">
    <property type="component" value="Chromosome"/>
</dbReference>
<dbReference type="GO" id="GO:0022625">
    <property type="term" value="C:cytosolic large ribosomal subunit"/>
    <property type="evidence" value="ECO:0007669"/>
    <property type="project" value="TreeGrafter"/>
</dbReference>
<dbReference type="GO" id="GO:0070180">
    <property type="term" value="F:large ribosomal subunit rRNA binding"/>
    <property type="evidence" value="ECO:0007669"/>
    <property type="project" value="UniProtKB-UniRule"/>
</dbReference>
<dbReference type="GO" id="GO:0003735">
    <property type="term" value="F:structural constituent of ribosome"/>
    <property type="evidence" value="ECO:0007669"/>
    <property type="project" value="InterPro"/>
</dbReference>
<dbReference type="GO" id="GO:0006412">
    <property type="term" value="P:translation"/>
    <property type="evidence" value="ECO:0007669"/>
    <property type="project" value="UniProtKB-UniRule"/>
</dbReference>
<dbReference type="CDD" id="cd00349">
    <property type="entry name" value="Ribosomal_L11"/>
    <property type="match status" value="1"/>
</dbReference>
<dbReference type="FunFam" id="3.30.1550.10:FF:000005">
    <property type="entry name" value="50S ribosomal protein L11"/>
    <property type="match status" value="1"/>
</dbReference>
<dbReference type="Gene3D" id="1.10.10.250">
    <property type="entry name" value="Ribosomal protein L11, C-terminal domain"/>
    <property type="match status" value="1"/>
</dbReference>
<dbReference type="Gene3D" id="3.30.1550.10">
    <property type="entry name" value="Ribosomal protein L11/L12, N-terminal domain"/>
    <property type="match status" value="1"/>
</dbReference>
<dbReference type="HAMAP" id="MF_00736">
    <property type="entry name" value="Ribosomal_uL11"/>
    <property type="match status" value="1"/>
</dbReference>
<dbReference type="InterPro" id="IPR000911">
    <property type="entry name" value="Ribosomal_uL11"/>
</dbReference>
<dbReference type="InterPro" id="IPR006519">
    <property type="entry name" value="Ribosomal_uL11_bac-typ"/>
</dbReference>
<dbReference type="InterPro" id="IPR020783">
    <property type="entry name" value="Ribosomal_uL11_C"/>
</dbReference>
<dbReference type="InterPro" id="IPR036769">
    <property type="entry name" value="Ribosomal_uL11_C_sf"/>
</dbReference>
<dbReference type="InterPro" id="IPR020784">
    <property type="entry name" value="Ribosomal_uL11_N"/>
</dbReference>
<dbReference type="InterPro" id="IPR036796">
    <property type="entry name" value="Ribosomal_uL11_N_sf"/>
</dbReference>
<dbReference type="NCBIfam" id="TIGR01632">
    <property type="entry name" value="L11_bact"/>
    <property type="match status" value="1"/>
</dbReference>
<dbReference type="PANTHER" id="PTHR11661">
    <property type="entry name" value="60S RIBOSOMAL PROTEIN L12"/>
    <property type="match status" value="1"/>
</dbReference>
<dbReference type="PANTHER" id="PTHR11661:SF1">
    <property type="entry name" value="LARGE RIBOSOMAL SUBUNIT PROTEIN UL11M"/>
    <property type="match status" value="1"/>
</dbReference>
<dbReference type="Pfam" id="PF00298">
    <property type="entry name" value="Ribosomal_L11"/>
    <property type="match status" value="1"/>
</dbReference>
<dbReference type="Pfam" id="PF03946">
    <property type="entry name" value="Ribosomal_L11_N"/>
    <property type="match status" value="1"/>
</dbReference>
<dbReference type="SMART" id="SM00649">
    <property type="entry name" value="RL11"/>
    <property type="match status" value="1"/>
</dbReference>
<dbReference type="SUPFAM" id="SSF54747">
    <property type="entry name" value="Ribosomal L11/L12e N-terminal domain"/>
    <property type="match status" value="1"/>
</dbReference>
<dbReference type="SUPFAM" id="SSF46906">
    <property type="entry name" value="Ribosomal protein L11, C-terminal domain"/>
    <property type="match status" value="1"/>
</dbReference>